<sequence length="135" mass="14508">MMVMTALTLLILFFGLAFILVGFGLILGYLIFSRKNKTVNGTANRTVVVERDSSNLLGTAAAVAGGVIAGELITDAIEDVINNNENNEADGYNSEGIETTIEDTIEEIDKGVDNVIEDITDEIDNITNDIGDSFF</sequence>
<accession>Q58852</accession>
<proteinExistence type="predicted"/>
<evidence type="ECO:0000255" key="1"/>
<evidence type="ECO:0000305" key="2"/>
<comment type="subcellular location">
    <subcellularLocation>
        <location evidence="2">Cell membrane</location>
        <topology evidence="2">Multi-pass membrane protein</topology>
    </subcellularLocation>
</comment>
<dbReference type="EMBL" id="L77117">
    <property type="protein sequence ID" value="AAB99470.1"/>
    <property type="molecule type" value="Genomic_DNA"/>
</dbReference>
<dbReference type="PIR" id="H64481">
    <property type="entry name" value="H64481"/>
</dbReference>
<dbReference type="SMR" id="Q58852"/>
<dbReference type="STRING" id="243232.MJ_1457"/>
<dbReference type="PaxDb" id="243232-MJ_1457"/>
<dbReference type="EnsemblBacteria" id="AAB99470">
    <property type="protein sequence ID" value="AAB99470"/>
    <property type="gene ID" value="MJ_1457"/>
</dbReference>
<dbReference type="KEGG" id="mja:MJ_1457"/>
<dbReference type="eggNOG" id="arCOG11086">
    <property type="taxonomic scope" value="Archaea"/>
</dbReference>
<dbReference type="HOGENOM" id="CLU_2152648_0_0_2"/>
<dbReference type="InParanoid" id="Q58852"/>
<dbReference type="Proteomes" id="UP000000805">
    <property type="component" value="Chromosome"/>
</dbReference>
<dbReference type="GO" id="GO:0005886">
    <property type="term" value="C:plasma membrane"/>
    <property type="evidence" value="ECO:0007669"/>
    <property type="project" value="UniProtKB-SubCell"/>
</dbReference>
<reference key="1">
    <citation type="journal article" date="1996" name="Science">
        <title>Complete genome sequence of the methanogenic archaeon, Methanococcus jannaschii.</title>
        <authorList>
            <person name="Bult C.J."/>
            <person name="White O."/>
            <person name="Olsen G.J."/>
            <person name="Zhou L."/>
            <person name="Fleischmann R.D."/>
            <person name="Sutton G.G."/>
            <person name="Blake J.A."/>
            <person name="FitzGerald L.M."/>
            <person name="Clayton R.A."/>
            <person name="Gocayne J.D."/>
            <person name="Kerlavage A.R."/>
            <person name="Dougherty B.A."/>
            <person name="Tomb J.-F."/>
            <person name="Adams M.D."/>
            <person name="Reich C.I."/>
            <person name="Overbeek R."/>
            <person name="Kirkness E.F."/>
            <person name="Weinstock K.G."/>
            <person name="Merrick J.M."/>
            <person name="Glodek A."/>
            <person name="Scott J.L."/>
            <person name="Geoghagen N.S.M."/>
            <person name="Weidman J.F."/>
            <person name="Fuhrmann J.L."/>
            <person name="Nguyen D."/>
            <person name="Utterback T.R."/>
            <person name="Kelley J.M."/>
            <person name="Peterson J.D."/>
            <person name="Sadow P.W."/>
            <person name="Hanna M.C."/>
            <person name="Cotton M.D."/>
            <person name="Roberts K.M."/>
            <person name="Hurst M.A."/>
            <person name="Kaine B.P."/>
            <person name="Borodovsky M."/>
            <person name="Klenk H.-P."/>
            <person name="Fraser C.M."/>
            <person name="Smith H.O."/>
            <person name="Woese C.R."/>
            <person name="Venter J.C."/>
        </authorList>
    </citation>
    <scope>NUCLEOTIDE SEQUENCE [LARGE SCALE GENOMIC DNA]</scope>
    <source>
        <strain>ATCC 43067 / DSM 2661 / JAL-1 / JCM 10045 / NBRC 100440</strain>
    </source>
</reference>
<organism>
    <name type="scientific">Methanocaldococcus jannaschii (strain ATCC 43067 / DSM 2661 / JAL-1 / JCM 10045 / NBRC 100440)</name>
    <name type="common">Methanococcus jannaschii</name>
    <dbReference type="NCBI Taxonomy" id="243232"/>
    <lineage>
        <taxon>Archaea</taxon>
        <taxon>Methanobacteriati</taxon>
        <taxon>Methanobacteriota</taxon>
        <taxon>Methanomada group</taxon>
        <taxon>Methanococci</taxon>
        <taxon>Methanococcales</taxon>
        <taxon>Methanocaldococcaceae</taxon>
        <taxon>Methanocaldococcus</taxon>
    </lineage>
</organism>
<keyword id="KW-1003">Cell membrane</keyword>
<keyword id="KW-0472">Membrane</keyword>
<keyword id="KW-1185">Reference proteome</keyword>
<keyword id="KW-0812">Transmembrane</keyword>
<keyword id="KW-1133">Transmembrane helix</keyword>
<protein>
    <recommendedName>
        <fullName>Uncharacterized protein MJ1457</fullName>
    </recommendedName>
</protein>
<name>Y1457_METJA</name>
<feature type="chain" id="PRO_0000107345" description="Uncharacterized protein MJ1457">
    <location>
        <begin position="1"/>
        <end position="135"/>
    </location>
</feature>
<feature type="transmembrane region" description="Helical" evidence="1">
    <location>
        <begin position="11"/>
        <end position="31"/>
    </location>
</feature>
<feature type="transmembrane region" description="Helical" evidence="1">
    <location>
        <begin position="57"/>
        <end position="77"/>
    </location>
</feature>
<gene>
    <name type="ordered locus">MJ1457</name>
</gene>